<organism>
    <name type="scientific">Rhodococcus opacus (strain B4)</name>
    <dbReference type="NCBI Taxonomy" id="632772"/>
    <lineage>
        <taxon>Bacteria</taxon>
        <taxon>Bacillati</taxon>
        <taxon>Actinomycetota</taxon>
        <taxon>Actinomycetes</taxon>
        <taxon>Mycobacteriales</taxon>
        <taxon>Nocardiaceae</taxon>
        <taxon>Rhodococcus</taxon>
    </lineage>
</organism>
<feature type="chain" id="PRO_0000400291" description="Mycothiol acetyltransferase">
    <location>
        <begin position="1"/>
        <end position="305"/>
    </location>
</feature>
<feature type="domain" description="N-acetyltransferase 1" evidence="1">
    <location>
        <begin position="10"/>
        <end position="154"/>
    </location>
</feature>
<feature type="domain" description="N-acetyltransferase 2" evidence="1">
    <location>
        <begin position="156"/>
        <end position="305"/>
    </location>
</feature>
<feature type="binding site" evidence="1">
    <location>
        <position position="38"/>
    </location>
    <ligand>
        <name>1D-myo-inositol 2-(L-cysteinylamino)-2-deoxy-alpha-D-glucopyranoside</name>
        <dbReference type="ChEBI" id="CHEBI:58887"/>
    </ligand>
</feature>
<feature type="binding site" evidence="1">
    <location>
        <begin position="82"/>
        <end position="84"/>
    </location>
    <ligand>
        <name>acetyl-CoA</name>
        <dbReference type="ChEBI" id="CHEBI:57288"/>
        <label>1</label>
    </ligand>
</feature>
<feature type="binding site" evidence="1">
    <location>
        <position position="183"/>
    </location>
    <ligand>
        <name>1D-myo-inositol 2-(L-cysteinylamino)-2-deoxy-alpha-D-glucopyranoside</name>
        <dbReference type="ChEBI" id="CHEBI:58887"/>
    </ligand>
</feature>
<feature type="binding site" evidence="1">
    <location>
        <position position="225"/>
    </location>
    <ligand>
        <name>1D-myo-inositol 2-(L-cysteinylamino)-2-deoxy-alpha-D-glucopyranoside</name>
        <dbReference type="ChEBI" id="CHEBI:58887"/>
    </ligand>
</feature>
<feature type="binding site" evidence="1">
    <location>
        <position position="238"/>
    </location>
    <ligand>
        <name>1D-myo-inositol 2-(L-cysteinylamino)-2-deoxy-alpha-D-glucopyranoside</name>
        <dbReference type="ChEBI" id="CHEBI:58887"/>
    </ligand>
</feature>
<feature type="binding site" evidence="1">
    <location>
        <begin position="242"/>
        <end position="244"/>
    </location>
    <ligand>
        <name>acetyl-CoA</name>
        <dbReference type="ChEBI" id="CHEBI:57288"/>
        <label>2</label>
    </ligand>
</feature>
<feature type="binding site" evidence="1">
    <location>
        <begin position="249"/>
        <end position="255"/>
    </location>
    <ligand>
        <name>acetyl-CoA</name>
        <dbReference type="ChEBI" id="CHEBI:57288"/>
        <label>2</label>
    </ligand>
</feature>
<feature type="binding site" evidence="1">
    <location>
        <position position="276"/>
    </location>
    <ligand>
        <name>1D-myo-inositol 2-(L-cysteinylamino)-2-deoxy-alpha-D-glucopyranoside</name>
        <dbReference type="ChEBI" id="CHEBI:58887"/>
    </ligand>
</feature>
<feature type="binding site" evidence="1">
    <location>
        <begin position="281"/>
        <end position="286"/>
    </location>
    <ligand>
        <name>acetyl-CoA</name>
        <dbReference type="ChEBI" id="CHEBI:57288"/>
        <label>2</label>
    </ligand>
</feature>
<evidence type="ECO:0000255" key="1">
    <source>
        <dbReference type="HAMAP-Rule" id="MF_01698"/>
    </source>
</evidence>
<sequence length="305" mass="32538">MSASVQSWTDRLDGAQAADVSALLGRATAADGTAPVSEQGVHAVSGAGGDGVRHLVETDADRIVGYAQLQPGHGEHPAMAELAVDPEARGRGIGGRLVAEVLSAGGPDTRVWAHGNLPAAQAVAQRLGLTGARELLQLRRPLAGAELPELVVLEGISLRVYRGVEDDPEVLRVNAAAFAWHPEQGSWTEREMAERRAEAWFDPAGLFMAFATSDEKRLLGFHWTKVHPKQGDEPAIGEVYVVAIGPDAQGRGLGRLLTLAGLHYLRDRGLGAVLLYVEGDNASALHTYDRLGFERFHTDVAYARA</sequence>
<dbReference type="EC" id="2.3.1.189" evidence="1"/>
<dbReference type="EMBL" id="AP011115">
    <property type="protein sequence ID" value="BAH53190.1"/>
    <property type="molecule type" value="Genomic_DNA"/>
</dbReference>
<dbReference type="RefSeq" id="WP_015888699.1">
    <property type="nucleotide sequence ID" value="NC_012522.1"/>
</dbReference>
<dbReference type="SMR" id="C1ATC6"/>
<dbReference type="STRING" id="632772.ROP_49430"/>
<dbReference type="KEGG" id="rop:ROP_49430"/>
<dbReference type="PATRIC" id="fig|632772.20.peg.5165"/>
<dbReference type="HOGENOM" id="CLU_068014_0_0_11"/>
<dbReference type="OrthoDB" id="3208058at2"/>
<dbReference type="Proteomes" id="UP000002212">
    <property type="component" value="Chromosome"/>
</dbReference>
<dbReference type="GO" id="GO:0035447">
    <property type="term" value="F:mycothiol synthase activity"/>
    <property type="evidence" value="ECO:0007669"/>
    <property type="project" value="UniProtKB-UniRule"/>
</dbReference>
<dbReference type="GO" id="GO:0008999">
    <property type="term" value="F:protein-N-terminal-alanine acetyltransferase activity"/>
    <property type="evidence" value="ECO:0007669"/>
    <property type="project" value="TreeGrafter"/>
</dbReference>
<dbReference type="GO" id="GO:0010125">
    <property type="term" value="P:mycothiol biosynthetic process"/>
    <property type="evidence" value="ECO:0007669"/>
    <property type="project" value="UniProtKB-UniRule"/>
</dbReference>
<dbReference type="CDD" id="cd04301">
    <property type="entry name" value="NAT_SF"/>
    <property type="match status" value="2"/>
</dbReference>
<dbReference type="Gene3D" id="3.40.630.30">
    <property type="match status" value="1"/>
</dbReference>
<dbReference type="HAMAP" id="MF_01698">
    <property type="entry name" value="MshD"/>
    <property type="match status" value="1"/>
</dbReference>
<dbReference type="InterPro" id="IPR016181">
    <property type="entry name" value="Acyl_CoA_acyltransferase"/>
</dbReference>
<dbReference type="InterPro" id="IPR000182">
    <property type="entry name" value="GNAT_dom"/>
</dbReference>
<dbReference type="InterPro" id="IPR050276">
    <property type="entry name" value="MshD_Acetyltransferase"/>
</dbReference>
<dbReference type="InterPro" id="IPR017813">
    <property type="entry name" value="Mycothiol_AcTrfase"/>
</dbReference>
<dbReference type="NCBIfam" id="TIGR03448">
    <property type="entry name" value="mycothiol_MshD"/>
    <property type="match status" value="1"/>
</dbReference>
<dbReference type="PANTHER" id="PTHR43617">
    <property type="entry name" value="L-AMINO ACID N-ACETYLTRANSFERASE"/>
    <property type="match status" value="1"/>
</dbReference>
<dbReference type="PANTHER" id="PTHR43617:SF31">
    <property type="entry name" value="MYCOTHIOL ACETYLTRANSFERASE"/>
    <property type="match status" value="1"/>
</dbReference>
<dbReference type="Pfam" id="PF00583">
    <property type="entry name" value="Acetyltransf_1"/>
    <property type="match status" value="2"/>
</dbReference>
<dbReference type="PIRSF" id="PIRSF021524">
    <property type="entry name" value="MSH_acetyltransferase"/>
    <property type="match status" value="1"/>
</dbReference>
<dbReference type="SUPFAM" id="SSF55729">
    <property type="entry name" value="Acyl-CoA N-acyltransferases (Nat)"/>
    <property type="match status" value="1"/>
</dbReference>
<dbReference type="PROSITE" id="PS51186">
    <property type="entry name" value="GNAT"/>
    <property type="match status" value="2"/>
</dbReference>
<accession>C1ATC6</accession>
<keyword id="KW-0012">Acyltransferase</keyword>
<keyword id="KW-0677">Repeat</keyword>
<keyword id="KW-0808">Transferase</keyword>
<gene>
    <name evidence="1" type="primary">mshD</name>
    <name type="ordered locus">ROP_49430</name>
</gene>
<name>MSHD_RHOOB</name>
<reference key="1">
    <citation type="submission" date="2009-03" db="EMBL/GenBank/DDBJ databases">
        <title>Comparison of the complete genome sequences of Rhodococcus erythropolis PR4 and Rhodococcus opacus B4.</title>
        <authorList>
            <person name="Takarada H."/>
            <person name="Sekine M."/>
            <person name="Hosoyama A."/>
            <person name="Yamada R."/>
            <person name="Fujisawa T."/>
            <person name="Omata S."/>
            <person name="Shimizu A."/>
            <person name="Tsukatani N."/>
            <person name="Tanikawa S."/>
            <person name="Fujita N."/>
            <person name="Harayama S."/>
        </authorList>
    </citation>
    <scope>NUCLEOTIDE SEQUENCE [LARGE SCALE GENOMIC DNA]</scope>
    <source>
        <strain>B4</strain>
    </source>
</reference>
<protein>
    <recommendedName>
        <fullName evidence="1">Mycothiol acetyltransferase</fullName>
        <shortName evidence="1">MSH acetyltransferase</shortName>
        <ecNumber evidence="1">2.3.1.189</ecNumber>
    </recommendedName>
    <alternativeName>
        <fullName evidence="1">Mycothiol synthase</fullName>
    </alternativeName>
</protein>
<proteinExistence type="inferred from homology"/>
<comment type="function">
    <text evidence="1">Catalyzes the transfer of acetyl from acetyl-CoA to desacetylmycothiol (Cys-GlcN-Ins) to form mycothiol.</text>
</comment>
<comment type="catalytic activity">
    <reaction evidence="1">
        <text>1D-myo-inositol 2-(L-cysteinylamino)-2-deoxy-alpha-D-glucopyranoside + acetyl-CoA = mycothiol + CoA + H(+)</text>
        <dbReference type="Rhea" id="RHEA:26172"/>
        <dbReference type="ChEBI" id="CHEBI:15378"/>
        <dbReference type="ChEBI" id="CHEBI:16768"/>
        <dbReference type="ChEBI" id="CHEBI:57287"/>
        <dbReference type="ChEBI" id="CHEBI:57288"/>
        <dbReference type="ChEBI" id="CHEBI:58887"/>
        <dbReference type="EC" id="2.3.1.189"/>
    </reaction>
</comment>
<comment type="subunit">
    <text evidence="1">Monomer.</text>
</comment>
<comment type="similarity">
    <text evidence="1">Belongs to the acetyltransferase family. MshD subfamily.</text>
</comment>